<organism evidence="8">
    <name type="scientific">Caenorhabditis elegans</name>
    <dbReference type="NCBI Taxonomy" id="6239"/>
    <lineage>
        <taxon>Eukaryota</taxon>
        <taxon>Metazoa</taxon>
        <taxon>Ecdysozoa</taxon>
        <taxon>Nematoda</taxon>
        <taxon>Chromadorea</taxon>
        <taxon>Rhabditida</taxon>
        <taxon>Rhabditina</taxon>
        <taxon>Rhabditomorpha</taxon>
        <taxon>Rhabditoidea</taxon>
        <taxon>Rhabditidae</taxon>
        <taxon>Peloderinae</taxon>
        <taxon>Caenorhabditis</taxon>
    </lineage>
</organism>
<name>HLH15_CAEEL</name>
<sequence>MLMEDGGLDTTSEEYRKLSKAERRKRRRATPKYRNLHATRERIRVESFNMAFSQLRALLPTLPVEKKLSKIEILRFSIAYISFLDNLLQ</sequence>
<protein>
    <recommendedName>
        <fullName evidence="7">Helix-loop-helix protein 15</fullName>
    </recommendedName>
</protein>
<comment type="function">
    <text evidence="1 5 6">Transcription factor which binds the E box motif 5'-CA[TC][AG]TG-3' (By similarity). Involved in modulating physiological aging, probably by regulating expression of branched-chain amino acid transferase-1, bcat-1 (PubMed:26620638, PubMed:32203922).</text>
</comment>
<comment type="subcellular location">
    <subcellularLocation>
        <location evidence="2">Nucleus</location>
    </subcellularLocation>
</comment>
<comment type="tissue specificity">
    <text evidence="4">Expressed in sensory head neurons of the lateral ganglion.</text>
</comment>
<comment type="disruption phenotype">
    <text evidence="5 6">RNAi-mediated knockdown extends mean lifespan and reduces expression of bcat-1 by &gt;50%.</text>
</comment>
<proteinExistence type="evidence at transcript level"/>
<keyword id="KW-0238">DNA-binding</keyword>
<keyword id="KW-0539">Nucleus</keyword>
<keyword id="KW-1185">Reference proteome</keyword>
<keyword id="KW-0804">Transcription</keyword>
<keyword id="KW-0805">Transcription regulation</keyword>
<evidence type="ECO:0000250" key="1">
    <source>
        <dbReference type="UniProtKB" id="Q64221"/>
    </source>
</evidence>
<evidence type="ECO:0000255" key="2">
    <source>
        <dbReference type="PROSITE-ProRule" id="PRU00981"/>
    </source>
</evidence>
<evidence type="ECO:0000256" key="3">
    <source>
        <dbReference type="SAM" id="MobiDB-lite"/>
    </source>
</evidence>
<evidence type="ECO:0000269" key="4">
    <source>
    </source>
</evidence>
<evidence type="ECO:0000269" key="5">
    <source>
    </source>
</evidence>
<evidence type="ECO:0000269" key="6">
    <source>
    </source>
</evidence>
<evidence type="ECO:0000305" key="7"/>
<evidence type="ECO:0000312" key="8">
    <source>
        <dbReference type="Proteomes" id="UP000001940"/>
    </source>
</evidence>
<evidence type="ECO:0000312" key="9">
    <source>
        <dbReference type="WormBase" id="C43H6.8"/>
    </source>
</evidence>
<feature type="chain" id="PRO_0000451921" description="Helix-loop-helix protein 15">
    <location>
        <begin position="1"/>
        <end position="89"/>
    </location>
</feature>
<feature type="domain" description="bHLH" evidence="2">
    <location>
        <begin position="32"/>
        <end position="84"/>
    </location>
</feature>
<feature type="region of interest" description="Disordered" evidence="3">
    <location>
        <begin position="1"/>
        <end position="32"/>
    </location>
</feature>
<feature type="region of interest" description="Basic motif" evidence="2">
    <location>
        <begin position="32"/>
        <end position="45"/>
    </location>
</feature>
<feature type="region of interest" description="Helix-loop-helix motif" evidence="2">
    <location>
        <begin position="46"/>
        <end position="84"/>
    </location>
</feature>
<feature type="compositionally biased region" description="Basic residues" evidence="3">
    <location>
        <begin position="22"/>
        <end position="32"/>
    </location>
</feature>
<dbReference type="EMBL" id="BX284606">
    <property type="protein sequence ID" value="CCD67185.1"/>
    <property type="molecule type" value="Genomic_DNA"/>
</dbReference>
<dbReference type="PIR" id="T29995">
    <property type="entry name" value="T29995"/>
</dbReference>
<dbReference type="RefSeq" id="NP_508440.1">
    <property type="nucleotide sequence ID" value="NM_076039.2"/>
</dbReference>
<dbReference type="SMR" id="Q18590"/>
<dbReference type="FunCoup" id="Q18590">
    <property type="interactions" value="116"/>
</dbReference>
<dbReference type="IntAct" id="Q18590">
    <property type="interactions" value="1"/>
</dbReference>
<dbReference type="STRING" id="6239.C43H6.8.1"/>
<dbReference type="PaxDb" id="6239-C43H6.8"/>
<dbReference type="EnsemblMetazoa" id="C43H6.8.1">
    <property type="protein sequence ID" value="C43H6.8.1"/>
    <property type="gene ID" value="WBGene00001959"/>
</dbReference>
<dbReference type="GeneID" id="183427"/>
<dbReference type="KEGG" id="cel:CELE_C43H6.8"/>
<dbReference type="UCSC" id="C43H6.8">
    <property type="organism name" value="c. elegans"/>
</dbReference>
<dbReference type="AGR" id="WB:WBGene00001959"/>
<dbReference type="CTD" id="183427"/>
<dbReference type="WormBase" id="C43H6.8">
    <property type="protein sequence ID" value="CE06959"/>
    <property type="gene ID" value="WBGene00001959"/>
    <property type="gene designation" value="hlh-15"/>
</dbReference>
<dbReference type="eggNOG" id="KOG4029">
    <property type="taxonomic scope" value="Eukaryota"/>
</dbReference>
<dbReference type="GeneTree" id="ENSGT00940000164480"/>
<dbReference type="HOGENOM" id="CLU_171328_1_1_1"/>
<dbReference type="InParanoid" id="Q18590"/>
<dbReference type="OMA" id="RVESFNM"/>
<dbReference type="OrthoDB" id="10067827at2759"/>
<dbReference type="PhylomeDB" id="Q18590"/>
<dbReference type="PRO" id="PR:Q18590"/>
<dbReference type="Proteomes" id="UP000001940">
    <property type="component" value="Chromosome X"/>
</dbReference>
<dbReference type="Bgee" id="WBGene00001959">
    <property type="expression patterns" value="Expressed in pharyngeal muscle cell (C elegans) and 2 other cell types or tissues"/>
</dbReference>
<dbReference type="GO" id="GO:0005634">
    <property type="term" value="C:nucleus"/>
    <property type="evidence" value="ECO:0000250"/>
    <property type="project" value="WormBase"/>
</dbReference>
<dbReference type="GO" id="GO:0000981">
    <property type="term" value="F:DNA-binding transcription factor activity, RNA polymerase II-specific"/>
    <property type="evidence" value="ECO:0000250"/>
    <property type="project" value="WormBase"/>
</dbReference>
<dbReference type="GO" id="GO:0046983">
    <property type="term" value="F:protein dimerization activity"/>
    <property type="evidence" value="ECO:0007669"/>
    <property type="project" value="InterPro"/>
</dbReference>
<dbReference type="GO" id="GO:0000978">
    <property type="term" value="F:RNA polymerase II cis-regulatory region sequence-specific DNA binding"/>
    <property type="evidence" value="ECO:0000318"/>
    <property type="project" value="GO_Central"/>
</dbReference>
<dbReference type="GO" id="GO:0061629">
    <property type="term" value="F:RNA polymerase II-specific DNA-binding transcription factor binding"/>
    <property type="evidence" value="ECO:0000353"/>
    <property type="project" value="WormBase"/>
</dbReference>
<dbReference type="GO" id="GO:0008340">
    <property type="term" value="P:determination of adult lifespan"/>
    <property type="evidence" value="ECO:0000315"/>
    <property type="project" value="UniProtKB"/>
</dbReference>
<dbReference type="GO" id="GO:0045893">
    <property type="term" value="P:positive regulation of DNA-templated transcription"/>
    <property type="evidence" value="ECO:0000315"/>
    <property type="project" value="UniProtKB"/>
</dbReference>
<dbReference type="GO" id="GO:0006357">
    <property type="term" value="P:regulation of transcription by RNA polymerase II"/>
    <property type="evidence" value="ECO:0000250"/>
    <property type="project" value="WormBase"/>
</dbReference>
<dbReference type="CDD" id="cd11414">
    <property type="entry name" value="bHLH_TS_HEN"/>
    <property type="match status" value="1"/>
</dbReference>
<dbReference type="FunFam" id="4.10.280.10:FF:000102">
    <property type="entry name" value="Nescient helix-loop-helix 1"/>
    <property type="match status" value="1"/>
</dbReference>
<dbReference type="Gene3D" id="4.10.280.10">
    <property type="entry name" value="Helix-loop-helix DNA-binding domain"/>
    <property type="match status" value="1"/>
</dbReference>
<dbReference type="InterPro" id="IPR011598">
    <property type="entry name" value="bHLH_dom"/>
</dbReference>
<dbReference type="InterPro" id="IPR036638">
    <property type="entry name" value="HLH_DNA-bd_sf"/>
</dbReference>
<dbReference type="InterPro" id="IPR040238">
    <property type="entry name" value="TAL-like"/>
</dbReference>
<dbReference type="PANTHER" id="PTHR13864:SF10">
    <property type="entry name" value="HELIX-LOOP-HELIX PROTEIN 2"/>
    <property type="match status" value="1"/>
</dbReference>
<dbReference type="PANTHER" id="PTHR13864">
    <property type="entry name" value="T-CELL ACUTE LYMPHOCYTIC LEUKEMIA/STEM CELL LEUKEMIA-RELATED"/>
    <property type="match status" value="1"/>
</dbReference>
<dbReference type="Pfam" id="PF00010">
    <property type="entry name" value="HLH"/>
    <property type="match status" value="1"/>
</dbReference>
<dbReference type="SMART" id="SM00353">
    <property type="entry name" value="HLH"/>
    <property type="match status" value="1"/>
</dbReference>
<dbReference type="SUPFAM" id="SSF47459">
    <property type="entry name" value="HLH, helix-loop-helix DNA-binding domain"/>
    <property type="match status" value="1"/>
</dbReference>
<dbReference type="PROSITE" id="PS50888">
    <property type="entry name" value="BHLH"/>
    <property type="match status" value="1"/>
</dbReference>
<gene>
    <name evidence="9" type="primary">hlh-15</name>
    <name evidence="9" type="ORF">C43H6.8</name>
</gene>
<accession>Q18590</accession>
<reference evidence="8" key="1">
    <citation type="journal article" date="1998" name="Science">
        <title>Genome sequence of the nematode C. elegans: a platform for investigating biology.</title>
        <authorList>
            <consortium name="The C. elegans sequencing consortium"/>
        </authorList>
    </citation>
    <scope>NUCLEOTIDE SEQUENCE [LARGE SCALE GENOMIC DNA]</scope>
    <source>
        <strain evidence="8">Bristol N2</strain>
    </source>
</reference>
<reference evidence="7" key="2">
    <citation type="journal article" date="2009" name="Cell">
        <title>A multiparameter network reveals extensive divergence between C. elegans bHLH transcription factors.</title>
        <authorList>
            <person name="Grove C.A."/>
            <person name="De Masi F."/>
            <person name="Barrasa M.I."/>
            <person name="Newburger D.E."/>
            <person name="Alkema M.J."/>
            <person name="Bulyk M.L."/>
            <person name="Walhout A.J.M."/>
        </authorList>
    </citation>
    <scope>TISSUE SPECIFICITY</scope>
</reference>
<reference evidence="7" key="3">
    <citation type="journal article" date="2015" name="Nat. Commun.">
        <title>Branched-chain amino acid catabolism is a conserved regulator of physiological ageing.</title>
        <authorList>
            <person name="Mansfeld J."/>
            <person name="Urban N."/>
            <person name="Priebe S."/>
            <person name="Groth M."/>
            <person name="Frahm C."/>
            <person name="Hartmann N."/>
            <person name="Gebauer J."/>
            <person name="Ravichandran M."/>
            <person name="Dommaschk A."/>
            <person name="Schmeisser S."/>
            <person name="Kuhlow D."/>
            <person name="Monajembashi S."/>
            <person name="Bremer-Streck S."/>
            <person name="Hemmerich P."/>
            <person name="Kiehntopf M."/>
            <person name="Zamboni N."/>
            <person name="Englert C."/>
            <person name="Guthke R."/>
            <person name="Kaleta C."/>
            <person name="Platzer M."/>
            <person name="Suehnel J."/>
            <person name="Witte O.W."/>
            <person name="Zarse K."/>
            <person name="Ristow M."/>
        </authorList>
    </citation>
    <scope>FUNCTION</scope>
    <scope>DISRUPTION PHENOTYPE</scope>
</reference>
<reference evidence="7" key="4">
    <citation type="journal article" date="2020" name="Redox Biol.">
        <title>Redox-mediated regulation of aging and healthspan by an evolutionarily conserved transcription factor HLH-2/Tcf3/E2A.</title>
        <authorList>
            <person name="Rozanov L."/>
            <person name="Ravichandran M."/>
            <person name="Grigolon G."/>
            <person name="Zanellati M.C."/>
            <person name="Mansfeld J."/>
            <person name="Zarse K."/>
            <person name="Barzilai N."/>
            <person name="Atzmon G."/>
            <person name="Fischer F."/>
            <person name="Ristow M."/>
        </authorList>
    </citation>
    <scope>FUNCTION</scope>
    <scope>DISRUPTION PHENOTYPE</scope>
</reference>